<proteinExistence type="inferred from homology"/>
<comment type="similarity">
    <text evidence="1">Belongs to the dGTPase family. Type 2 subfamily.</text>
</comment>
<protein>
    <recommendedName>
        <fullName evidence="1">Deoxyguanosinetriphosphate triphosphohydrolase-like protein 2</fullName>
    </recommendedName>
</protein>
<dbReference type="EMBL" id="AE000513">
    <property type="protein sequence ID" value="AAF11362.1"/>
    <property type="molecule type" value="Genomic_DNA"/>
</dbReference>
<dbReference type="PIR" id="D75352">
    <property type="entry name" value="D75352"/>
</dbReference>
<dbReference type="RefSeq" id="NP_295531.1">
    <property type="nucleotide sequence ID" value="NC_001263.1"/>
</dbReference>
<dbReference type="RefSeq" id="WP_010888443.1">
    <property type="nucleotide sequence ID" value="NC_001263.1"/>
</dbReference>
<dbReference type="SMR" id="Q9RTF6"/>
<dbReference type="STRING" id="243230.DR_1808"/>
<dbReference type="PaxDb" id="243230-DR_1808"/>
<dbReference type="EnsemblBacteria" id="AAF11362">
    <property type="protein sequence ID" value="AAF11362"/>
    <property type="gene ID" value="DR_1808"/>
</dbReference>
<dbReference type="GeneID" id="69518048"/>
<dbReference type="KEGG" id="dra:DR_1808"/>
<dbReference type="eggNOG" id="COG0232">
    <property type="taxonomic scope" value="Bacteria"/>
</dbReference>
<dbReference type="HOGENOM" id="CLU_028163_0_0_0"/>
<dbReference type="InParanoid" id="Q9RTF6"/>
<dbReference type="OrthoDB" id="9803619at2"/>
<dbReference type="Proteomes" id="UP000002524">
    <property type="component" value="Chromosome 1"/>
</dbReference>
<dbReference type="GO" id="GO:0008832">
    <property type="term" value="F:dGTPase activity"/>
    <property type="evidence" value="ECO:0000318"/>
    <property type="project" value="GO_Central"/>
</dbReference>
<dbReference type="GO" id="GO:0006203">
    <property type="term" value="P:dGTP catabolic process"/>
    <property type="evidence" value="ECO:0000318"/>
    <property type="project" value="GO_Central"/>
</dbReference>
<dbReference type="CDD" id="cd00077">
    <property type="entry name" value="HDc"/>
    <property type="match status" value="1"/>
</dbReference>
<dbReference type="Gene3D" id="1.10.3210.10">
    <property type="entry name" value="Hypothetical protein af1432"/>
    <property type="match status" value="1"/>
</dbReference>
<dbReference type="HAMAP" id="MF_01212">
    <property type="entry name" value="dGTPase_type2"/>
    <property type="match status" value="1"/>
</dbReference>
<dbReference type="InterPro" id="IPR006261">
    <property type="entry name" value="dGTPase"/>
</dbReference>
<dbReference type="InterPro" id="IPR050135">
    <property type="entry name" value="dGTPase-like"/>
</dbReference>
<dbReference type="InterPro" id="IPR023023">
    <property type="entry name" value="dNTPase_2"/>
</dbReference>
<dbReference type="InterPro" id="IPR003607">
    <property type="entry name" value="HD/PDEase_dom"/>
</dbReference>
<dbReference type="InterPro" id="IPR006674">
    <property type="entry name" value="HD_domain"/>
</dbReference>
<dbReference type="InterPro" id="IPR026875">
    <property type="entry name" value="PHydrolase_assoc_dom"/>
</dbReference>
<dbReference type="NCBIfam" id="NF041026">
    <property type="entry name" value="antiphage_dGTPase"/>
    <property type="match status" value="1"/>
</dbReference>
<dbReference type="NCBIfam" id="TIGR01353">
    <property type="entry name" value="dGTP_triPase"/>
    <property type="match status" value="1"/>
</dbReference>
<dbReference type="NCBIfam" id="NF003701">
    <property type="entry name" value="PRK05318.1"/>
    <property type="match status" value="1"/>
</dbReference>
<dbReference type="PANTHER" id="PTHR11373:SF32">
    <property type="entry name" value="DEOXYGUANOSINETRIPHOSPHATE TRIPHOSPHOHYDROLASE"/>
    <property type="match status" value="1"/>
</dbReference>
<dbReference type="PANTHER" id="PTHR11373">
    <property type="entry name" value="DEOXYNUCLEOSIDE TRIPHOSPHATE TRIPHOSPHOHYDROLASE"/>
    <property type="match status" value="1"/>
</dbReference>
<dbReference type="Pfam" id="PF01966">
    <property type="entry name" value="HD"/>
    <property type="match status" value="1"/>
</dbReference>
<dbReference type="Pfam" id="PF13286">
    <property type="entry name" value="HD_assoc"/>
    <property type="match status" value="1"/>
</dbReference>
<dbReference type="SMART" id="SM00471">
    <property type="entry name" value="HDc"/>
    <property type="match status" value="1"/>
</dbReference>
<dbReference type="SUPFAM" id="SSF109604">
    <property type="entry name" value="HD-domain/PDEase-like"/>
    <property type="match status" value="1"/>
</dbReference>
<dbReference type="PROSITE" id="PS51831">
    <property type="entry name" value="HD"/>
    <property type="match status" value="1"/>
</dbReference>
<accession>Q9RTF6</accession>
<name>DGT1B_DEIRA</name>
<gene>
    <name type="ordered locus">DR_1808</name>
</gene>
<reference key="1">
    <citation type="journal article" date="1999" name="Science">
        <title>Genome sequence of the radioresistant bacterium Deinococcus radiodurans R1.</title>
        <authorList>
            <person name="White O."/>
            <person name="Eisen J.A."/>
            <person name="Heidelberg J.F."/>
            <person name="Hickey E.K."/>
            <person name="Peterson J.D."/>
            <person name="Dodson R.J."/>
            <person name="Haft D.H."/>
            <person name="Gwinn M.L."/>
            <person name="Nelson W.C."/>
            <person name="Richardson D.L."/>
            <person name="Moffat K.S."/>
            <person name="Qin H."/>
            <person name="Jiang L."/>
            <person name="Pamphile W."/>
            <person name="Crosby M."/>
            <person name="Shen M."/>
            <person name="Vamathevan J.J."/>
            <person name="Lam P."/>
            <person name="McDonald L.A."/>
            <person name="Utterback T.R."/>
            <person name="Zalewski C."/>
            <person name="Makarova K.S."/>
            <person name="Aravind L."/>
            <person name="Daly M.J."/>
            <person name="Minton K.W."/>
            <person name="Fleischmann R.D."/>
            <person name="Ketchum K.A."/>
            <person name="Nelson K.E."/>
            <person name="Salzberg S.L."/>
            <person name="Smith H.O."/>
            <person name="Venter J.C."/>
            <person name="Fraser C.M."/>
        </authorList>
    </citation>
    <scope>NUCLEOTIDE SEQUENCE [LARGE SCALE GENOMIC DNA]</scope>
    <source>
        <strain>ATCC 13939 / DSM 20539 / JCM 16871 / CCUG 27074 / LMG 4051 / NBRC 15346 / NCIMB 9279 / VKM B-1422 / R1</strain>
    </source>
</reference>
<sequence>MTAIVEPTWEERRTPEAAHEDDARSQYRKDYSRIIHSAALRRLQTKTQVLGLGDSDFYRTRLTHSLEVAQIGVGILLEIQRRFAGSNIEKYLPDERLLEAICLSHDYGHPPFGHGGERALNFAMREYGGFEGNAQTFRILSKLEKYSQNSGLNPTRRTLLGVLKYPTTYSNSMTNDFRRGTDIDKYPDAELKPPKCIYDCDLDVLDWVLKIFCSEDVTEFKKLDYKCKPLHKSLDCSLMETADDIAYTVHDLEDCIKLKLINREMWDAYIKSADYSEATRLEIEKWNQRIFSKEGNLVKQGISNMVYFFIHSVIQYEHEELSHPILKYGFKLGEEAARLRSAIQKIITNEVIKTHRVRVLESKGQRMIFSIFGELVRDPESFLPRETLDKYNKATGNLRMRVICDYVSGMTDEYATKTYQRFFTPKFGSVFDV</sequence>
<evidence type="ECO:0000255" key="1">
    <source>
        <dbReference type="HAMAP-Rule" id="MF_01212"/>
    </source>
</evidence>
<evidence type="ECO:0000255" key="2">
    <source>
        <dbReference type="PROSITE-ProRule" id="PRU01175"/>
    </source>
</evidence>
<feature type="chain" id="PRO_0000205304" description="Deoxyguanosinetriphosphate triphosphohydrolase-like protein 2">
    <location>
        <begin position="1"/>
        <end position="433"/>
    </location>
</feature>
<feature type="domain" description="HD" evidence="2">
    <location>
        <begin position="61"/>
        <end position="248"/>
    </location>
</feature>
<organism>
    <name type="scientific">Deinococcus radiodurans (strain ATCC 13939 / DSM 20539 / JCM 16871 / CCUG 27074 / LMG 4051 / NBRC 15346 / NCIMB 9279 / VKM B-1422 / R1)</name>
    <dbReference type="NCBI Taxonomy" id="243230"/>
    <lineage>
        <taxon>Bacteria</taxon>
        <taxon>Thermotogati</taxon>
        <taxon>Deinococcota</taxon>
        <taxon>Deinococci</taxon>
        <taxon>Deinococcales</taxon>
        <taxon>Deinococcaceae</taxon>
        <taxon>Deinococcus</taxon>
    </lineage>
</organism>
<keyword id="KW-0378">Hydrolase</keyword>
<keyword id="KW-1185">Reference proteome</keyword>